<protein>
    <recommendedName>
        <fullName evidence="1">UDP-2,3-diacylglucosamine hydrolase</fullName>
        <ecNumber evidence="1">3.6.1.54</ecNumber>
    </recommendedName>
    <alternativeName>
        <fullName evidence="1">UDP-2,3-diacylglucosamine diphosphatase</fullName>
    </alternativeName>
</protein>
<accession>B1XGC2</accession>
<proteinExistence type="inferred from homology"/>
<evidence type="ECO:0000255" key="1">
    <source>
        <dbReference type="HAMAP-Rule" id="MF_00575"/>
    </source>
</evidence>
<dbReference type="EC" id="3.6.1.54" evidence="1"/>
<dbReference type="EMBL" id="CP000948">
    <property type="protein sequence ID" value="ACB01649.1"/>
    <property type="molecule type" value="Genomic_DNA"/>
</dbReference>
<dbReference type="RefSeq" id="WP_000212247.1">
    <property type="nucleotide sequence ID" value="NC_010473.1"/>
</dbReference>
<dbReference type="SMR" id="B1XGC2"/>
<dbReference type="KEGG" id="ecd:ECDH10B_0480"/>
<dbReference type="HOGENOM" id="CLU_074586_0_0_6"/>
<dbReference type="UniPathway" id="UPA00359">
    <property type="reaction ID" value="UER00480"/>
</dbReference>
<dbReference type="GO" id="GO:0005737">
    <property type="term" value="C:cytoplasm"/>
    <property type="evidence" value="ECO:0007669"/>
    <property type="project" value="InterPro"/>
</dbReference>
<dbReference type="GO" id="GO:0019897">
    <property type="term" value="C:extrinsic component of plasma membrane"/>
    <property type="evidence" value="ECO:0007669"/>
    <property type="project" value="UniProtKB-UniRule"/>
</dbReference>
<dbReference type="GO" id="GO:0030145">
    <property type="term" value="F:manganese ion binding"/>
    <property type="evidence" value="ECO:0007669"/>
    <property type="project" value="UniProtKB-UniRule"/>
</dbReference>
<dbReference type="GO" id="GO:0008758">
    <property type="term" value="F:UDP-2,3-diacylglucosamine hydrolase activity"/>
    <property type="evidence" value="ECO:0007669"/>
    <property type="project" value="UniProtKB-UniRule"/>
</dbReference>
<dbReference type="GO" id="GO:0009245">
    <property type="term" value="P:lipid A biosynthetic process"/>
    <property type="evidence" value="ECO:0007669"/>
    <property type="project" value="UniProtKB-UniRule"/>
</dbReference>
<dbReference type="CDD" id="cd07398">
    <property type="entry name" value="MPP_YbbF-LpxH"/>
    <property type="match status" value="1"/>
</dbReference>
<dbReference type="FunFam" id="3.60.21.10:FF:000012">
    <property type="entry name" value="UDP-2,3-diacylglucosamine hydrolase"/>
    <property type="match status" value="1"/>
</dbReference>
<dbReference type="Gene3D" id="3.60.21.10">
    <property type="match status" value="1"/>
</dbReference>
<dbReference type="HAMAP" id="MF_00575">
    <property type="entry name" value="LpxH"/>
    <property type="match status" value="1"/>
</dbReference>
<dbReference type="InterPro" id="IPR004843">
    <property type="entry name" value="Calcineurin-like_PHP_ApaH"/>
</dbReference>
<dbReference type="InterPro" id="IPR043461">
    <property type="entry name" value="LpxH-like"/>
</dbReference>
<dbReference type="InterPro" id="IPR029052">
    <property type="entry name" value="Metallo-depent_PP-like"/>
</dbReference>
<dbReference type="InterPro" id="IPR010138">
    <property type="entry name" value="UDP-diacylglucosamine_Hdrlase"/>
</dbReference>
<dbReference type="NCBIfam" id="TIGR01854">
    <property type="entry name" value="lipid_A_lpxH"/>
    <property type="match status" value="1"/>
</dbReference>
<dbReference type="NCBIfam" id="NF003743">
    <property type="entry name" value="PRK05340.1"/>
    <property type="match status" value="1"/>
</dbReference>
<dbReference type="PANTHER" id="PTHR34990:SF1">
    <property type="entry name" value="UDP-2,3-DIACYLGLUCOSAMINE HYDROLASE"/>
    <property type="match status" value="1"/>
</dbReference>
<dbReference type="PANTHER" id="PTHR34990">
    <property type="entry name" value="UDP-2,3-DIACYLGLUCOSAMINE HYDROLASE-RELATED"/>
    <property type="match status" value="1"/>
</dbReference>
<dbReference type="Pfam" id="PF00149">
    <property type="entry name" value="Metallophos"/>
    <property type="match status" value="1"/>
</dbReference>
<dbReference type="SUPFAM" id="SSF56300">
    <property type="entry name" value="Metallo-dependent phosphatases"/>
    <property type="match status" value="1"/>
</dbReference>
<organism>
    <name type="scientific">Escherichia coli (strain K12 / DH10B)</name>
    <dbReference type="NCBI Taxonomy" id="316385"/>
    <lineage>
        <taxon>Bacteria</taxon>
        <taxon>Pseudomonadati</taxon>
        <taxon>Pseudomonadota</taxon>
        <taxon>Gammaproteobacteria</taxon>
        <taxon>Enterobacterales</taxon>
        <taxon>Enterobacteriaceae</taxon>
        <taxon>Escherichia</taxon>
    </lineage>
</organism>
<comment type="function">
    <text evidence="1">Hydrolyzes the pyrophosphate bond of UDP-2,3-diacylglucosamine to yield 2,3-diacylglucosamine 1-phosphate (lipid X) and UMP by catalyzing the attack of water at the alpha-P atom. Involved in the biosynthesis of lipid A, a phosphorylated glycolipid that anchors the lipopolysaccharide to the outer membrane of the cell.</text>
</comment>
<comment type="catalytic activity">
    <reaction evidence="1">
        <text>UDP-2-N,3-O-bis[(3R)-3-hydroxytetradecanoyl]-alpha-D-glucosamine + H2O = 2-N,3-O-bis[(3R)-3-hydroxytetradecanoyl]-alpha-D-glucosaminyl 1-phosphate + UMP + 2 H(+)</text>
        <dbReference type="Rhea" id="RHEA:25213"/>
        <dbReference type="ChEBI" id="CHEBI:15377"/>
        <dbReference type="ChEBI" id="CHEBI:15378"/>
        <dbReference type="ChEBI" id="CHEBI:57865"/>
        <dbReference type="ChEBI" id="CHEBI:57957"/>
        <dbReference type="ChEBI" id="CHEBI:78847"/>
        <dbReference type="EC" id="3.6.1.54"/>
    </reaction>
</comment>
<comment type="cofactor">
    <cofactor evidence="1">
        <name>Mn(2+)</name>
        <dbReference type="ChEBI" id="CHEBI:29035"/>
    </cofactor>
    <text evidence="1">Binds 2 Mn(2+) ions per subunit in a binuclear metal center.</text>
</comment>
<comment type="pathway">
    <text evidence="1">Glycolipid biosynthesis; lipid IV(A) biosynthesis; lipid IV(A) from (3R)-3-hydroxytetradecanoyl-[acyl-carrier-protein] and UDP-N-acetyl-alpha-D-glucosamine: step 4/6.</text>
</comment>
<comment type="subcellular location">
    <subcellularLocation>
        <location evidence="1">Cell inner membrane</location>
        <topology evidence="1">Peripheral membrane protein</topology>
        <orientation evidence="1">Cytoplasmic side</orientation>
    </subcellularLocation>
</comment>
<comment type="similarity">
    <text evidence="1">Belongs to the LpxH family.</text>
</comment>
<reference key="1">
    <citation type="journal article" date="2008" name="J. Bacteriol.">
        <title>The complete genome sequence of Escherichia coli DH10B: insights into the biology of a laboratory workhorse.</title>
        <authorList>
            <person name="Durfee T."/>
            <person name="Nelson R."/>
            <person name="Baldwin S."/>
            <person name="Plunkett G. III"/>
            <person name="Burland V."/>
            <person name="Mau B."/>
            <person name="Petrosino J.F."/>
            <person name="Qin X."/>
            <person name="Muzny D.M."/>
            <person name="Ayele M."/>
            <person name="Gibbs R.A."/>
            <person name="Csorgo B."/>
            <person name="Posfai G."/>
            <person name="Weinstock G.M."/>
            <person name="Blattner F.R."/>
        </authorList>
    </citation>
    <scope>NUCLEOTIDE SEQUENCE [LARGE SCALE GENOMIC DNA]</scope>
    <source>
        <strain>K12 / DH10B</strain>
    </source>
</reference>
<gene>
    <name evidence="1" type="primary">lpxH</name>
    <name type="ordered locus">ECDH10B_0480</name>
</gene>
<feature type="chain" id="PRO_1000129521" description="UDP-2,3-diacylglucosamine hydrolase">
    <location>
        <begin position="1"/>
        <end position="240"/>
    </location>
</feature>
<feature type="binding site" evidence="1">
    <location>
        <position position="8"/>
    </location>
    <ligand>
        <name>Mn(2+)</name>
        <dbReference type="ChEBI" id="CHEBI:29035"/>
        <label>1</label>
    </ligand>
</feature>
<feature type="binding site" evidence="1">
    <location>
        <position position="10"/>
    </location>
    <ligand>
        <name>Mn(2+)</name>
        <dbReference type="ChEBI" id="CHEBI:29035"/>
        <label>1</label>
    </ligand>
</feature>
<feature type="binding site" evidence="1">
    <location>
        <position position="41"/>
    </location>
    <ligand>
        <name>Mn(2+)</name>
        <dbReference type="ChEBI" id="CHEBI:29035"/>
        <label>1</label>
    </ligand>
</feature>
<feature type="binding site" evidence="1">
    <location>
        <position position="41"/>
    </location>
    <ligand>
        <name>Mn(2+)</name>
        <dbReference type="ChEBI" id="CHEBI:29035"/>
        <label>2</label>
    </ligand>
</feature>
<feature type="binding site" evidence="1">
    <location>
        <begin position="79"/>
        <end position="80"/>
    </location>
    <ligand>
        <name>substrate</name>
    </ligand>
</feature>
<feature type="binding site" evidence="1">
    <location>
        <position position="79"/>
    </location>
    <ligand>
        <name>Mn(2+)</name>
        <dbReference type="ChEBI" id="CHEBI:29035"/>
        <label>2</label>
    </ligand>
</feature>
<feature type="binding site" evidence="1">
    <location>
        <position position="114"/>
    </location>
    <ligand>
        <name>Mn(2+)</name>
        <dbReference type="ChEBI" id="CHEBI:29035"/>
        <label>2</label>
    </ligand>
</feature>
<feature type="binding site" evidence="1">
    <location>
        <position position="122"/>
    </location>
    <ligand>
        <name>substrate</name>
    </ligand>
</feature>
<feature type="binding site" evidence="1">
    <location>
        <position position="160"/>
    </location>
    <ligand>
        <name>substrate</name>
    </ligand>
</feature>
<feature type="binding site" evidence="1">
    <location>
        <position position="164"/>
    </location>
    <ligand>
        <name>substrate</name>
    </ligand>
</feature>
<feature type="binding site" evidence="1">
    <location>
        <position position="167"/>
    </location>
    <ligand>
        <name>substrate</name>
    </ligand>
</feature>
<feature type="binding site" evidence="1">
    <location>
        <position position="195"/>
    </location>
    <ligand>
        <name>Mn(2+)</name>
        <dbReference type="ChEBI" id="CHEBI:29035"/>
        <label>2</label>
    </ligand>
</feature>
<feature type="binding site" evidence="1">
    <location>
        <position position="195"/>
    </location>
    <ligand>
        <name>substrate</name>
    </ligand>
</feature>
<feature type="binding site" evidence="1">
    <location>
        <position position="197"/>
    </location>
    <ligand>
        <name>Mn(2+)</name>
        <dbReference type="ChEBI" id="CHEBI:29035"/>
        <label>1</label>
    </ligand>
</feature>
<keyword id="KW-0997">Cell inner membrane</keyword>
<keyword id="KW-1003">Cell membrane</keyword>
<keyword id="KW-0378">Hydrolase</keyword>
<keyword id="KW-0441">Lipid A biosynthesis</keyword>
<keyword id="KW-0444">Lipid biosynthesis</keyword>
<keyword id="KW-0443">Lipid metabolism</keyword>
<keyword id="KW-0464">Manganese</keyword>
<keyword id="KW-0472">Membrane</keyword>
<keyword id="KW-0479">Metal-binding</keyword>
<sequence>MATLFIADLHLCVEEPAITAGFLRFLAGEARKADALYILGDLFEAWIGDDDPNPLHRKMAAAIKAVSDSGVPCYFIHGNRDFLLGKRFARESGMTLLPEEKVLELYGRRVLIMHGDTLCTDDAGYQAFRAKVHKPWLQTLFLALPLFVRKRIAARMRANSKEANSSKSLAIMDVNQNAVVSAMEKHQVQWLIHGHTHRPAVHELIANQQPAFRVVLGAWHTEGSMVKVTADDVELIHFPF</sequence>
<name>LPXH_ECODH</name>